<keyword id="KW-0067">ATP-binding</keyword>
<keyword id="KW-0235">DNA replication</keyword>
<keyword id="KW-0547">Nucleotide-binding</keyword>
<keyword id="KW-1185">Reference proteome</keyword>
<comment type="function">
    <text evidence="1">Part of the RFC clamp loader complex which loads the PCNA sliding clamp onto DNA.</text>
</comment>
<comment type="subunit">
    <text evidence="1">Heteromultimer composed of small subunits (RfcS) and large subunits (RfcL).</text>
</comment>
<comment type="similarity">
    <text evidence="1">Belongs to the activator 1 small subunits family. RfcL subfamily.</text>
</comment>
<dbReference type="EMBL" id="AE010299">
    <property type="protein sequence ID" value="AAM05216.1"/>
    <property type="molecule type" value="Genomic_DNA"/>
</dbReference>
<dbReference type="SMR" id="Q8TPU4"/>
<dbReference type="FunCoup" id="Q8TPU4">
    <property type="interactions" value="13"/>
</dbReference>
<dbReference type="STRING" id="188937.MA_1810"/>
<dbReference type="EnsemblBacteria" id="AAM05216">
    <property type="protein sequence ID" value="AAM05216"/>
    <property type="gene ID" value="MA_1810"/>
</dbReference>
<dbReference type="KEGG" id="mac:MA_1810"/>
<dbReference type="HOGENOM" id="CLU_027255_0_0_2"/>
<dbReference type="InParanoid" id="Q8TPU4"/>
<dbReference type="OrthoDB" id="8658at2157"/>
<dbReference type="PhylomeDB" id="Q8TPU4"/>
<dbReference type="Proteomes" id="UP000002487">
    <property type="component" value="Chromosome"/>
</dbReference>
<dbReference type="GO" id="GO:0005524">
    <property type="term" value="F:ATP binding"/>
    <property type="evidence" value="ECO:0007669"/>
    <property type="project" value="UniProtKB-UniRule"/>
</dbReference>
<dbReference type="GO" id="GO:0016887">
    <property type="term" value="F:ATP hydrolysis activity"/>
    <property type="evidence" value="ECO:0007669"/>
    <property type="project" value="InterPro"/>
</dbReference>
<dbReference type="GO" id="GO:0003689">
    <property type="term" value="F:DNA clamp loader activity"/>
    <property type="evidence" value="ECO:0007669"/>
    <property type="project" value="UniProtKB-UniRule"/>
</dbReference>
<dbReference type="GO" id="GO:0006260">
    <property type="term" value="P:DNA replication"/>
    <property type="evidence" value="ECO:0007669"/>
    <property type="project" value="UniProtKB-UniRule"/>
</dbReference>
<dbReference type="CDD" id="cd00009">
    <property type="entry name" value="AAA"/>
    <property type="match status" value="1"/>
</dbReference>
<dbReference type="CDD" id="cd18140">
    <property type="entry name" value="HLD_clamp_RFC"/>
    <property type="match status" value="1"/>
</dbReference>
<dbReference type="Gene3D" id="1.10.8.60">
    <property type="match status" value="1"/>
</dbReference>
<dbReference type="Gene3D" id="3.40.50.300">
    <property type="entry name" value="P-loop containing nucleotide triphosphate hydrolases"/>
    <property type="match status" value="1"/>
</dbReference>
<dbReference type="HAMAP" id="MF_01508">
    <property type="entry name" value="RfcL"/>
    <property type="match status" value="1"/>
</dbReference>
<dbReference type="InterPro" id="IPR003593">
    <property type="entry name" value="AAA+_ATPase"/>
</dbReference>
<dbReference type="InterPro" id="IPR003959">
    <property type="entry name" value="ATPase_AAA_core"/>
</dbReference>
<dbReference type="InterPro" id="IPR027417">
    <property type="entry name" value="P-loop_NTPase"/>
</dbReference>
<dbReference type="InterPro" id="IPR023935">
    <property type="entry name" value="Rep_factor-C_lsu"/>
</dbReference>
<dbReference type="InterPro" id="IPR047854">
    <property type="entry name" value="RFC_lid"/>
</dbReference>
<dbReference type="NCBIfam" id="NF003229">
    <property type="entry name" value="PRK04195.1-5"/>
    <property type="match status" value="1"/>
</dbReference>
<dbReference type="NCBIfam" id="NF003231">
    <property type="entry name" value="PRK04195.2-1"/>
    <property type="match status" value="1"/>
</dbReference>
<dbReference type="PANTHER" id="PTHR23389">
    <property type="entry name" value="CHROMOSOME TRANSMISSION FIDELITY FACTOR 18"/>
    <property type="match status" value="1"/>
</dbReference>
<dbReference type="PANTHER" id="PTHR23389:SF6">
    <property type="entry name" value="REPLICATION FACTOR C SUBUNIT 1"/>
    <property type="match status" value="1"/>
</dbReference>
<dbReference type="Pfam" id="PF00004">
    <property type="entry name" value="AAA"/>
    <property type="match status" value="1"/>
</dbReference>
<dbReference type="Pfam" id="PF21960">
    <property type="entry name" value="RCF1-5-like_lid"/>
    <property type="match status" value="1"/>
</dbReference>
<dbReference type="SMART" id="SM00382">
    <property type="entry name" value="AAA"/>
    <property type="match status" value="1"/>
</dbReference>
<dbReference type="SUPFAM" id="SSF52540">
    <property type="entry name" value="P-loop containing nucleoside triphosphate hydrolases"/>
    <property type="match status" value="1"/>
</dbReference>
<feature type="chain" id="PRO_0000135951" description="Replication factor C large subunit">
    <location>
        <begin position="1"/>
        <end position="607"/>
    </location>
</feature>
<feature type="region of interest" description="Disordered" evidence="2">
    <location>
        <begin position="468"/>
        <end position="607"/>
    </location>
</feature>
<feature type="compositionally biased region" description="Basic and acidic residues" evidence="2">
    <location>
        <begin position="506"/>
        <end position="518"/>
    </location>
</feature>
<feature type="compositionally biased region" description="Polar residues" evidence="2">
    <location>
        <begin position="548"/>
        <end position="558"/>
    </location>
</feature>
<feature type="binding site" evidence="1">
    <location>
        <begin position="55"/>
        <end position="62"/>
    </location>
    <ligand>
        <name>ATP</name>
        <dbReference type="ChEBI" id="CHEBI:30616"/>
    </ligand>
</feature>
<sequence>MVWFKMMSAIEWAEKYRPRTLEDVVGNKKAVRDFRAWAEEWQSRIPETRAVILYGPAGIGKTSSAHALARDMDWDVIELNASDQRTAGVIEKIAGSAASMNTLFGSKRLIILDEADNIHGTADRGGMRAISGIIKGTLQPIVLIANDIYGLTPTIRNLCLEIKFGSVQSRSMVPALKKVCGAEGVYCSQEALLQIAENAGGDFRSAINDLQAAASGKEKLEVEDIGTAGRDVKENIFKAMQKIFKSTDCKKALESAYGLDESPEDLVHWIDENLPIQYARKDGNLEDIKTGFGYLSKADLYLGRVKKRQNYRMWRYASMLMVCGAALSKTKPYPGFIKYQQPSLWRRLGQTRSKRDMRDNIASKIGEHSFESMHYSRNNLLGLYSRMLKDEESAVEVTANLGLELEELMYLTGSAKASKKLQKIYDKAQKLLEEGKNETADPDFFKAPVPAVDNKQRTLSCPVIIQEEEEKPQKEGSAGKSDPPGPHSSERKQKTLNMGFDSLLETSEKKENSEKKENSGYLLVDDPKPAEKNLFSFSPSLLEKKNFSESVEQKTSSKPSKKGNPANNEPSKQKILDKVTPTESVQDNAGDGAKKAEPKNQKTLFDF</sequence>
<accession>Q8TPU4</accession>
<reference key="1">
    <citation type="journal article" date="2002" name="Genome Res.">
        <title>The genome of Methanosarcina acetivorans reveals extensive metabolic and physiological diversity.</title>
        <authorList>
            <person name="Galagan J.E."/>
            <person name="Nusbaum C."/>
            <person name="Roy A."/>
            <person name="Endrizzi M.G."/>
            <person name="Macdonald P."/>
            <person name="FitzHugh W."/>
            <person name="Calvo S."/>
            <person name="Engels R."/>
            <person name="Smirnov S."/>
            <person name="Atnoor D."/>
            <person name="Brown A."/>
            <person name="Allen N."/>
            <person name="Naylor J."/>
            <person name="Stange-Thomann N."/>
            <person name="DeArellano K."/>
            <person name="Johnson R."/>
            <person name="Linton L."/>
            <person name="McEwan P."/>
            <person name="McKernan K."/>
            <person name="Talamas J."/>
            <person name="Tirrell A."/>
            <person name="Ye W."/>
            <person name="Zimmer A."/>
            <person name="Barber R.D."/>
            <person name="Cann I."/>
            <person name="Graham D.E."/>
            <person name="Grahame D.A."/>
            <person name="Guss A.M."/>
            <person name="Hedderich R."/>
            <person name="Ingram-Smith C."/>
            <person name="Kuettner H.C."/>
            <person name="Krzycki J.A."/>
            <person name="Leigh J.A."/>
            <person name="Li W."/>
            <person name="Liu J."/>
            <person name="Mukhopadhyay B."/>
            <person name="Reeve J.N."/>
            <person name="Smith K."/>
            <person name="Springer T.A."/>
            <person name="Umayam L.A."/>
            <person name="White O."/>
            <person name="White R.H."/>
            <person name="de Macario E.C."/>
            <person name="Ferry J.G."/>
            <person name="Jarrell K.F."/>
            <person name="Jing H."/>
            <person name="Macario A.J.L."/>
            <person name="Paulsen I.T."/>
            <person name="Pritchett M."/>
            <person name="Sowers K.R."/>
            <person name="Swanson R.V."/>
            <person name="Zinder S.H."/>
            <person name="Lander E."/>
            <person name="Metcalf W.W."/>
            <person name="Birren B."/>
        </authorList>
    </citation>
    <scope>NUCLEOTIDE SEQUENCE [LARGE SCALE GENOMIC DNA]</scope>
    <source>
        <strain>ATCC 35395 / DSM 2834 / JCM 12185 / C2A</strain>
    </source>
</reference>
<name>RFCL_METAC</name>
<organism>
    <name type="scientific">Methanosarcina acetivorans (strain ATCC 35395 / DSM 2834 / JCM 12185 / C2A)</name>
    <dbReference type="NCBI Taxonomy" id="188937"/>
    <lineage>
        <taxon>Archaea</taxon>
        <taxon>Methanobacteriati</taxon>
        <taxon>Methanobacteriota</taxon>
        <taxon>Stenosarchaea group</taxon>
        <taxon>Methanomicrobia</taxon>
        <taxon>Methanosarcinales</taxon>
        <taxon>Methanosarcinaceae</taxon>
        <taxon>Methanosarcina</taxon>
    </lineage>
</organism>
<evidence type="ECO:0000255" key="1">
    <source>
        <dbReference type="HAMAP-Rule" id="MF_01508"/>
    </source>
</evidence>
<evidence type="ECO:0000256" key="2">
    <source>
        <dbReference type="SAM" id="MobiDB-lite"/>
    </source>
</evidence>
<gene>
    <name evidence="1" type="primary">rfcL</name>
    <name type="ordered locus">MA_1810</name>
</gene>
<protein>
    <recommendedName>
        <fullName evidence="1">Replication factor C large subunit</fullName>
        <shortName evidence="1">RFC large subunit</shortName>
    </recommendedName>
    <alternativeName>
        <fullName evidence="1">Clamp loader large subunit</fullName>
    </alternativeName>
</protein>
<proteinExistence type="inferred from homology"/>